<gene>
    <name evidence="1" type="primary">glmU</name>
    <name type="synonym">gcaD</name>
    <name type="ordered locus">SAR0500</name>
</gene>
<feature type="chain" id="PRO_0000068711" description="Bifunctional protein GlmU">
    <location>
        <begin position="1"/>
        <end position="450"/>
    </location>
</feature>
<feature type="region of interest" description="Pyrophosphorylase" evidence="1">
    <location>
        <begin position="1"/>
        <end position="229"/>
    </location>
</feature>
<feature type="region of interest" description="Linker" evidence="1">
    <location>
        <begin position="230"/>
        <end position="250"/>
    </location>
</feature>
<feature type="region of interest" description="N-acetyltransferase" evidence="1">
    <location>
        <begin position="251"/>
        <end position="450"/>
    </location>
</feature>
<feature type="active site" description="Proton acceptor" evidence="1">
    <location>
        <position position="362"/>
    </location>
</feature>
<feature type="binding site" evidence="1">
    <location>
        <begin position="8"/>
        <end position="11"/>
    </location>
    <ligand>
        <name>UDP-N-acetyl-alpha-D-glucosamine</name>
        <dbReference type="ChEBI" id="CHEBI:57705"/>
    </ligand>
</feature>
<feature type="binding site" evidence="1">
    <location>
        <position position="22"/>
    </location>
    <ligand>
        <name>UDP-N-acetyl-alpha-D-glucosamine</name>
        <dbReference type="ChEBI" id="CHEBI:57705"/>
    </ligand>
</feature>
<feature type="binding site" evidence="1">
    <location>
        <position position="72"/>
    </location>
    <ligand>
        <name>UDP-N-acetyl-alpha-D-glucosamine</name>
        <dbReference type="ChEBI" id="CHEBI:57705"/>
    </ligand>
</feature>
<feature type="binding site" evidence="1">
    <location>
        <begin position="77"/>
        <end position="78"/>
    </location>
    <ligand>
        <name>UDP-N-acetyl-alpha-D-glucosamine</name>
        <dbReference type="ChEBI" id="CHEBI:57705"/>
    </ligand>
</feature>
<feature type="binding site" evidence="1">
    <location>
        <position position="102"/>
    </location>
    <ligand>
        <name>Mg(2+)</name>
        <dbReference type="ChEBI" id="CHEBI:18420"/>
    </ligand>
</feature>
<feature type="binding site" evidence="1">
    <location>
        <position position="139"/>
    </location>
    <ligand>
        <name>UDP-N-acetyl-alpha-D-glucosamine</name>
        <dbReference type="ChEBI" id="CHEBI:57705"/>
    </ligand>
</feature>
<feature type="binding site" evidence="1">
    <location>
        <position position="154"/>
    </location>
    <ligand>
        <name>UDP-N-acetyl-alpha-D-glucosamine</name>
        <dbReference type="ChEBI" id="CHEBI:57705"/>
    </ligand>
</feature>
<feature type="binding site" evidence="1">
    <location>
        <position position="227"/>
    </location>
    <ligand>
        <name>Mg(2+)</name>
        <dbReference type="ChEBI" id="CHEBI:18420"/>
    </ligand>
</feature>
<feature type="binding site" evidence="1">
    <location>
        <position position="227"/>
    </location>
    <ligand>
        <name>UDP-N-acetyl-alpha-D-glucosamine</name>
        <dbReference type="ChEBI" id="CHEBI:57705"/>
    </ligand>
</feature>
<feature type="binding site" evidence="1">
    <location>
        <position position="332"/>
    </location>
    <ligand>
        <name>UDP-N-acetyl-alpha-D-glucosamine</name>
        <dbReference type="ChEBI" id="CHEBI:57705"/>
    </ligand>
</feature>
<feature type="binding site" evidence="1">
    <location>
        <position position="350"/>
    </location>
    <ligand>
        <name>UDP-N-acetyl-alpha-D-glucosamine</name>
        <dbReference type="ChEBI" id="CHEBI:57705"/>
    </ligand>
</feature>
<feature type="binding site" evidence="1">
    <location>
        <position position="365"/>
    </location>
    <ligand>
        <name>UDP-N-acetyl-alpha-D-glucosamine</name>
        <dbReference type="ChEBI" id="CHEBI:57705"/>
    </ligand>
</feature>
<feature type="binding site" evidence="1">
    <location>
        <position position="376"/>
    </location>
    <ligand>
        <name>UDP-N-acetyl-alpha-D-glucosamine</name>
        <dbReference type="ChEBI" id="CHEBI:57705"/>
    </ligand>
</feature>
<feature type="binding site" evidence="1">
    <location>
        <begin position="385"/>
        <end position="386"/>
    </location>
    <ligand>
        <name>acetyl-CoA</name>
        <dbReference type="ChEBI" id="CHEBI:57288"/>
    </ligand>
</feature>
<feature type="binding site" evidence="1">
    <location>
        <position position="422"/>
    </location>
    <ligand>
        <name>acetyl-CoA</name>
        <dbReference type="ChEBI" id="CHEBI:57288"/>
    </ligand>
</feature>
<feature type="binding site" evidence="1">
    <location>
        <position position="439"/>
    </location>
    <ligand>
        <name>acetyl-CoA</name>
        <dbReference type="ChEBI" id="CHEBI:57288"/>
    </ligand>
</feature>
<reference key="1">
    <citation type="journal article" date="2004" name="Proc. Natl. Acad. Sci. U.S.A.">
        <title>Complete genomes of two clinical Staphylococcus aureus strains: evidence for the rapid evolution of virulence and drug resistance.</title>
        <authorList>
            <person name="Holden M.T.G."/>
            <person name="Feil E.J."/>
            <person name="Lindsay J.A."/>
            <person name="Peacock S.J."/>
            <person name="Day N.P.J."/>
            <person name="Enright M.C."/>
            <person name="Foster T.J."/>
            <person name="Moore C.E."/>
            <person name="Hurst L."/>
            <person name="Atkin R."/>
            <person name="Barron A."/>
            <person name="Bason N."/>
            <person name="Bentley S.D."/>
            <person name="Chillingworth C."/>
            <person name="Chillingworth T."/>
            <person name="Churcher C."/>
            <person name="Clark L."/>
            <person name="Corton C."/>
            <person name="Cronin A."/>
            <person name="Doggett J."/>
            <person name="Dowd L."/>
            <person name="Feltwell T."/>
            <person name="Hance Z."/>
            <person name="Harris B."/>
            <person name="Hauser H."/>
            <person name="Holroyd S."/>
            <person name="Jagels K."/>
            <person name="James K.D."/>
            <person name="Lennard N."/>
            <person name="Line A."/>
            <person name="Mayes R."/>
            <person name="Moule S."/>
            <person name="Mungall K."/>
            <person name="Ormond D."/>
            <person name="Quail M.A."/>
            <person name="Rabbinowitsch E."/>
            <person name="Rutherford K.M."/>
            <person name="Sanders M."/>
            <person name="Sharp S."/>
            <person name="Simmonds M."/>
            <person name="Stevens K."/>
            <person name="Whitehead S."/>
            <person name="Barrell B.G."/>
            <person name="Spratt B.G."/>
            <person name="Parkhill J."/>
        </authorList>
    </citation>
    <scope>NUCLEOTIDE SEQUENCE [LARGE SCALE GENOMIC DNA]</scope>
    <source>
        <strain>MRSA252</strain>
    </source>
</reference>
<evidence type="ECO:0000255" key="1">
    <source>
        <dbReference type="HAMAP-Rule" id="MF_01631"/>
    </source>
</evidence>
<proteinExistence type="inferred from homology"/>
<comment type="function">
    <text evidence="1">Catalyzes the last two sequential reactions in the de novo biosynthetic pathway for UDP-N-acetylglucosamine (UDP-GlcNAc). The C-terminal domain catalyzes the transfer of acetyl group from acetyl coenzyme A to glucosamine-1-phosphate (GlcN-1-P) to produce N-acetylglucosamine-1-phosphate (GlcNAc-1-P), which is converted into UDP-GlcNAc by the transfer of uridine 5-monophosphate (from uridine 5-triphosphate), a reaction catalyzed by the N-terminal domain.</text>
</comment>
<comment type="catalytic activity">
    <reaction evidence="1">
        <text>alpha-D-glucosamine 1-phosphate + acetyl-CoA = N-acetyl-alpha-D-glucosamine 1-phosphate + CoA + H(+)</text>
        <dbReference type="Rhea" id="RHEA:13725"/>
        <dbReference type="ChEBI" id="CHEBI:15378"/>
        <dbReference type="ChEBI" id="CHEBI:57287"/>
        <dbReference type="ChEBI" id="CHEBI:57288"/>
        <dbReference type="ChEBI" id="CHEBI:57776"/>
        <dbReference type="ChEBI" id="CHEBI:58516"/>
        <dbReference type="EC" id="2.3.1.157"/>
    </reaction>
</comment>
<comment type="catalytic activity">
    <reaction evidence="1">
        <text>N-acetyl-alpha-D-glucosamine 1-phosphate + UTP + H(+) = UDP-N-acetyl-alpha-D-glucosamine + diphosphate</text>
        <dbReference type="Rhea" id="RHEA:13509"/>
        <dbReference type="ChEBI" id="CHEBI:15378"/>
        <dbReference type="ChEBI" id="CHEBI:33019"/>
        <dbReference type="ChEBI" id="CHEBI:46398"/>
        <dbReference type="ChEBI" id="CHEBI:57705"/>
        <dbReference type="ChEBI" id="CHEBI:57776"/>
        <dbReference type="EC" id="2.7.7.23"/>
    </reaction>
</comment>
<comment type="cofactor">
    <cofactor evidence="1">
        <name>Mg(2+)</name>
        <dbReference type="ChEBI" id="CHEBI:18420"/>
    </cofactor>
    <text evidence="1">Binds 1 Mg(2+) ion per subunit.</text>
</comment>
<comment type="pathway">
    <text evidence="1">Nucleotide-sugar biosynthesis; UDP-N-acetyl-alpha-D-glucosamine biosynthesis; N-acetyl-alpha-D-glucosamine 1-phosphate from alpha-D-glucosamine 6-phosphate (route II): step 2/2.</text>
</comment>
<comment type="pathway">
    <text evidence="1">Nucleotide-sugar biosynthesis; UDP-N-acetyl-alpha-D-glucosamine biosynthesis; UDP-N-acetyl-alpha-D-glucosamine from N-acetyl-alpha-D-glucosamine 1-phosphate: step 1/1.</text>
</comment>
<comment type="pathway">
    <text evidence="1">Bacterial outer membrane biogenesis; LPS lipid A biosynthesis.</text>
</comment>
<comment type="subunit">
    <text evidence="1">Homotrimer.</text>
</comment>
<comment type="subcellular location">
    <subcellularLocation>
        <location evidence="1">Cytoplasm</location>
    </subcellularLocation>
</comment>
<comment type="similarity">
    <text evidence="1">In the N-terminal section; belongs to the N-acetylglucosamine-1-phosphate uridyltransferase family.</text>
</comment>
<comment type="similarity">
    <text evidence="1">In the C-terminal section; belongs to the transferase hexapeptide repeat family.</text>
</comment>
<accession>Q6GJH2</accession>
<sequence length="450" mass="48519">MRRHAIILAAGKGTRMKSKKYKVLHEVAGKPMVEHVLESVKGSGVDQVVTIVGHGAESVKGHLGERSLYSFQEEQLGTAHAVQMAKSHLEDKEGTTIVVCGDTPLITKETLETLIAHHEDANAQATVLSASIQQPYGYGRIVRNASGRLERIVEEKDATQAEKDINEISSGIFAFNNKTLFEKLTQVKNDNAQGEYYLPDVLSLILNDGGIVEVYRTNDVEEIMGVNDRVMLSQAENAMQRRTNHYHMLNGVTIIDPDSTYIGPDVTIGSDTVIEPGVRINGRTEIGEDVVIGQYSEINNSTIENGACIQQSVVNDASVGANTKVGPFAQLRPGAQLGADVKVGNFVEIKKADLKDGAKVSHLSYIGDAVIGERTNIGCGTITVNYDGENKFKTIVGKDSFVGCNVNLVAPVTIGDDVLVAAGSTITDDVPNDSLAVARARQTTKEGYRK</sequence>
<protein>
    <recommendedName>
        <fullName evidence="1">Bifunctional protein GlmU</fullName>
    </recommendedName>
    <domain>
        <recommendedName>
            <fullName evidence="1">UDP-N-acetylglucosamine pyrophosphorylase</fullName>
            <ecNumber evidence="1">2.7.7.23</ecNumber>
        </recommendedName>
        <alternativeName>
            <fullName evidence="1">N-acetylglucosamine-1-phosphate uridyltransferase</fullName>
        </alternativeName>
    </domain>
    <domain>
        <recommendedName>
            <fullName evidence="1">Glucosamine-1-phosphate N-acetyltransferase</fullName>
            <ecNumber evidence="1">2.3.1.157</ecNumber>
        </recommendedName>
    </domain>
</protein>
<dbReference type="EC" id="2.7.7.23" evidence="1"/>
<dbReference type="EC" id="2.3.1.157" evidence="1"/>
<dbReference type="EMBL" id="BX571856">
    <property type="protein sequence ID" value="CAG39522.1"/>
    <property type="molecule type" value="Genomic_DNA"/>
</dbReference>
<dbReference type="RefSeq" id="WP_001252534.1">
    <property type="nucleotide sequence ID" value="NC_002952.2"/>
</dbReference>
<dbReference type="SMR" id="Q6GJH2"/>
<dbReference type="KEGG" id="sar:SAR0500"/>
<dbReference type="HOGENOM" id="CLU_029499_15_2_9"/>
<dbReference type="UniPathway" id="UPA00113">
    <property type="reaction ID" value="UER00532"/>
</dbReference>
<dbReference type="UniPathway" id="UPA00113">
    <property type="reaction ID" value="UER00533"/>
</dbReference>
<dbReference type="UniPathway" id="UPA00973"/>
<dbReference type="Proteomes" id="UP000000596">
    <property type="component" value="Chromosome"/>
</dbReference>
<dbReference type="GO" id="GO:0005737">
    <property type="term" value="C:cytoplasm"/>
    <property type="evidence" value="ECO:0007669"/>
    <property type="project" value="UniProtKB-SubCell"/>
</dbReference>
<dbReference type="GO" id="GO:0016020">
    <property type="term" value="C:membrane"/>
    <property type="evidence" value="ECO:0007669"/>
    <property type="project" value="GOC"/>
</dbReference>
<dbReference type="GO" id="GO:0019134">
    <property type="term" value="F:glucosamine-1-phosphate N-acetyltransferase activity"/>
    <property type="evidence" value="ECO:0007669"/>
    <property type="project" value="UniProtKB-UniRule"/>
</dbReference>
<dbReference type="GO" id="GO:0000287">
    <property type="term" value="F:magnesium ion binding"/>
    <property type="evidence" value="ECO:0007669"/>
    <property type="project" value="UniProtKB-UniRule"/>
</dbReference>
<dbReference type="GO" id="GO:0003977">
    <property type="term" value="F:UDP-N-acetylglucosamine diphosphorylase activity"/>
    <property type="evidence" value="ECO:0007669"/>
    <property type="project" value="UniProtKB-UniRule"/>
</dbReference>
<dbReference type="GO" id="GO:0000902">
    <property type="term" value="P:cell morphogenesis"/>
    <property type="evidence" value="ECO:0007669"/>
    <property type="project" value="UniProtKB-UniRule"/>
</dbReference>
<dbReference type="GO" id="GO:0071555">
    <property type="term" value="P:cell wall organization"/>
    <property type="evidence" value="ECO:0007669"/>
    <property type="project" value="UniProtKB-KW"/>
</dbReference>
<dbReference type="GO" id="GO:0009245">
    <property type="term" value="P:lipid A biosynthetic process"/>
    <property type="evidence" value="ECO:0007669"/>
    <property type="project" value="UniProtKB-UniRule"/>
</dbReference>
<dbReference type="GO" id="GO:0009252">
    <property type="term" value="P:peptidoglycan biosynthetic process"/>
    <property type="evidence" value="ECO:0007669"/>
    <property type="project" value="UniProtKB-UniRule"/>
</dbReference>
<dbReference type="GO" id="GO:0008360">
    <property type="term" value="P:regulation of cell shape"/>
    <property type="evidence" value="ECO:0007669"/>
    <property type="project" value="UniProtKB-KW"/>
</dbReference>
<dbReference type="GO" id="GO:0006048">
    <property type="term" value="P:UDP-N-acetylglucosamine biosynthetic process"/>
    <property type="evidence" value="ECO:0007669"/>
    <property type="project" value="UniProtKB-UniPathway"/>
</dbReference>
<dbReference type="CDD" id="cd02540">
    <property type="entry name" value="GT2_GlmU_N_bac"/>
    <property type="match status" value="1"/>
</dbReference>
<dbReference type="CDD" id="cd03353">
    <property type="entry name" value="LbH_GlmU_C"/>
    <property type="match status" value="1"/>
</dbReference>
<dbReference type="Gene3D" id="2.160.10.10">
    <property type="entry name" value="Hexapeptide repeat proteins"/>
    <property type="match status" value="1"/>
</dbReference>
<dbReference type="Gene3D" id="3.90.550.10">
    <property type="entry name" value="Spore Coat Polysaccharide Biosynthesis Protein SpsA, Chain A"/>
    <property type="match status" value="1"/>
</dbReference>
<dbReference type="HAMAP" id="MF_01631">
    <property type="entry name" value="GlmU"/>
    <property type="match status" value="1"/>
</dbReference>
<dbReference type="InterPro" id="IPR005882">
    <property type="entry name" value="Bifunctional_GlmU"/>
</dbReference>
<dbReference type="InterPro" id="IPR050065">
    <property type="entry name" value="GlmU-like"/>
</dbReference>
<dbReference type="InterPro" id="IPR038009">
    <property type="entry name" value="GlmU_C_LbH"/>
</dbReference>
<dbReference type="InterPro" id="IPR001451">
    <property type="entry name" value="Hexapep"/>
</dbReference>
<dbReference type="InterPro" id="IPR018357">
    <property type="entry name" value="Hexapep_transf_CS"/>
</dbReference>
<dbReference type="InterPro" id="IPR005835">
    <property type="entry name" value="NTP_transferase_dom"/>
</dbReference>
<dbReference type="InterPro" id="IPR029044">
    <property type="entry name" value="Nucleotide-diphossugar_trans"/>
</dbReference>
<dbReference type="InterPro" id="IPR011004">
    <property type="entry name" value="Trimer_LpxA-like_sf"/>
</dbReference>
<dbReference type="NCBIfam" id="TIGR01173">
    <property type="entry name" value="glmU"/>
    <property type="match status" value="1"/>
</dbReference>
<dbReference type="NCBIfam" id="NF010934">
    <property type="entry name" value="PRK14354.1"/>
    <property type="match status" value="1"/>
</dbReference>
<dbReference type="PANTHER" id="PTHR43584:SF3">
    <property type="entry name" value="BIFUNCTIONAL PROTEIN GLMU"/>
    <property type="match status" value="1"/>
</dbReference>
<dbReference type="PANTHER" id="PTHR43584">
    <property type="entry name" value="NUCLEOTIDYL TRANSFERASE"/>
    <property type="match status" value="1"/>
</dbReference>
<dbReference type="Pfam" id="PF00132">
    <property type="entry name" value="Hexapep"/>
    <property type="match status" value="2"/>
</dbReference>
<dbReference type="Pfam" id="PF00483">
    <property type="entry name" value="NTP_transferase"/>
    <property type="match status" value="1"/>
</dbReference>
<dbReference type="SUPFAM" id="SSF53448">
    <property type="entry name" value="Nucleotide-diphospho-sugar transferases"/>
    <property type="match status" value="1"/>
</dbReference>
<dbReference type="SUPFAM" id="SSF51161">
    <property type="entry name" value="Trimeric LpxA-like enzymes"/>
    <property type="match status" value="1"/>
</dbReference>
<dbReference type="PROSITE" id="PS00101">
    <property type="entry name" value="HEXAPEP_TRANSFERASES"/>
    <property type="match status" value="1"/>
</dbReference>
<organism>
    <name type="scientific">Staphylococcus aureus (strain MRSA252)</name>
    <dbReference type="NCBI Taxonomy" id="282458"/>
    <lineage>
        <taxon>Bacteria</taxon>
        <taxon>Bacillati</taxon>
        <taxon>Bacillota</taxon>
        <taxon>Bacilli</taxon>
        <taxon>Bacillales</taxon>
        <taxon>Staphylococcaceae</taxon>
        <taxon>Staphylococcus</taxon>
    </lineage>
</organism>
<name>GLMU_STAAR</name>
<keyword id="KW-0012">Acyltransferase</keyword>
<keyword id="KW-0133">Cell shape</keyword>
<keyword id="KW-0961">Cell wall biogenesis/degradation</keyword>
<keyword id="KW-0963">Cytoplasm</keyword>
<keyword id="KW-0460">Magnesium</keyword>
<keyword id="KW-0479">Metal-binding</keyword>
<keyword id="KW-0511">Multifunctional enzyme</keyword>
<keyword id="KW-0548">Nucleotidyltransferase</keyword>
<keyword id="KW-0573">Peptidoglycan synthesis</keyword>
<keyword id="KW-0677">Repeat</keyword>
<keyword id="KW-0808">Transferase</keyword>